<name>GLO4_YEAST</name>
<accession>Q12320</accession>
<accession>D6W2A7</accession>
<protein>
    <recommendedName>
        <fullName evidence="7">Hydroxyacylglutathione hydrolase, mitochondrial</fullName>
        <ecNumber evidence="2">3.1.2.6</ecNumber>
    </recommendedName>
    <alternativeName>
        <fullName evidence="6">Glyoxalase II</fullName>
        <shortName>Glx II</shortName>
    </alternativeName>
</protein>
<reference key="1">
    <citation type="journal article" date="1997" name="J. Biol. Chem.">
        <title>Identification and phenotypic analysis of two glyoxalase II encoding genes from Saccharomyces cerevisiae, GLO2 and GLO4, and intracellular localization of the corresponding proteins.</title>
        <authorList>
            <person name="Bito A."/>
            <person name="Haider M."/>
            <person name="Hadler I."/>
            <person name="Breitenbach M."/>
        </authorList>
    </citation>
    <scope>NUCLEOTIDE SEQUENCE [GENOMIC DNA]</scope>
    <scope>SUBCELLULAR LOCATION</scope>
    <scope>PATHWAY</scope>
    <source>
        <strain>AP3</strain>
    </source>
</reference>
<reference key="2">
    <citation type="journal article" date="1997" name="Nature">
        <title>The nucleotide sequence of Saccharomyces cerevisiae chromosome XV.</title>
        <authorList>
            <person name="Dujon B."/>
            <person name="Albermann K."/>
            <person name="Aldea M."/>
            <person name="Alexandraki D."/>
            <person name="Ansorge W."/>
            <person name="Arino J."/>
            <person name="Benes V."/>
            <person name="Bohn C."/>
            <person name="Bolotin-Fukuhara M."/>
            <person name="Bordonne R."/>
            <person name="Boyer J."/>
            <person name="Camasses A."/>
            <person name="Casamayor A."/>
            <person name="Casas C."/>
            <person name="Cheret G."/>
            <person name="Cziepluch C."/>
            <person name="Daignan-Fornier B."/>
            <person name="Dang V.-D."/>
            <person name="de Haan M."/>
            <person name="Delius H."/>
            <person name="Durand P."/>
            <person name="Fairhead C."/>
            <person name="Feldmann H."/>
            <person name="Gaillon L."/>
            <person name="Galisson F."/>
            <person name="Gamo F.-J."/>
            <person name="Gancedo C."/>
            <person name="Goffeau A."/>
            <person name="Goulding S.E."/>
            <person name="Grivell L.A."/>
            <person name="Habbig B."/>
            <person name="Hand N.J."/>
            <person name="Hani J."/>
            <person name="Hattenhorst U."/>
            <person name="Hebling U."/>
            <person name="Hernando Y."/>
            <person name="Herrero E."/>
            <person name="Heumann K."/>
            <person name="Hiesel R."/>
            <person name="Hilger F."/>
            <person name="Hofmann B."/>
            <person name="Hollenberg C.P."/>
            <person name="Hughes B."/>
            <person name="Jauniaux J.-C."/>
            <person name="Kalogeropoulos A."/>
            <person name="Katsoulou C."/>
            <person name="Kordes E."/>
            <person name="Lafuente M.J."/>
            <person name="Landt O."/>
            <person name="Louis E.J."/>
            <person name="Maarse A.C."/>
            <person name="Madania A."/>
            <person name="Mannhaupt G."/>
            <person name="Marck C."/>
            <person name="Martin R.P."/>
            <person name="Mewes H.-W."/>
            <person name="Michaux G."/>
            <person name="Paces V."/>
            <person name="Parle-McDermott A.G."/>
            <person name="Pearson B.M."/>
            <person name="Perrin A."/>
            <person name="Pettersson B."/>
            <person name="Poch O."/>
            <person name="Pohl T.M."/>
            <person name="Poirey R."/>
            <person name="Portetelle D."/>
            <person name="Pujol A."/>
            <person name="Purnelle B."/>
            <person name="Ramezani Rad M."/>
            <person name="Rechmann S."/>
            <person name="Schwager C."/>
            <person name="Schweizer M."/>
            <person name="Sor F."/>
            <person name="Sterky F."/>
            <person name="Tarassov I.A."/>
            <person name="Teodoru C."/>
            <person name="Tettelin H."/>
            <person name="Thierry A."/>
            <person name="Tobiasch E."/>
            <person name="Tzermia M."/>
            <person name="Uhlen M."/>
            <person name="Unseld M."/>
            <person name="Valens M."/>
            <person name="Vandenbol M."/>
            <person name="Vetter I."/>
            <person name="Vlcek C."/>
            <person name="Voet M."/>
            <person name="Volckaert G."/>
            <person name="Voss H."/>
            <person name="Wambutt R."/>
            <person name="Wedler H."/>
            <person name="Wiemann S."/>
            <person name="Winsor B."/>
            <person name="Wolfe K.H."/>
            <person name="Zollner A."/>
            <person name="Zumstein E."/>
            <person name="Kleine K."/>
        </authorList>
    </citation>
    <scope>NUCLEOTIDE SEQUENCE [LARGE SCALE GENOMIC DNA]</scope>
    <source>
        <strain>ATCC 204508 / S288c</strain>
    </source>
</reference>
<reference key="3">
    <citation type="journal article" date="2014" name="G3 (Bethesda)">
        <title>The reference genome sequence of Saccharomyces cerevisiae: Then and now.</title>
        <authorList>
            <person name="Engel S.R."/>
            <person name="Dietrich F.S."/>
            <person name="Fisk D.G."/>
            <person name="Binkley G."/>
            <person name="Balakrishnan R."/>
            <person name="Costanzo M.C."/>
            <person name="Dwight S.S."/>
            <person name="Hitz B.C."/>
            <person name="Karra K."/>
            <person name="Nash R.S."/>
            <person name="Weng S."/>
            <person name="Wong E.D."/>
            <person name="Lloyd P."/>
            <person name="Skrzypek M.S."/>
            <person name="Miyasato S.R."/>
            <person name="Simison M."/>
            <person name="Cherry J.M."/>
        </authorList>
    </citation>
    <scope>GENOME REANNOTATION</scope>
    <source>
        <strain>ATCC 204508 / S288c</strain>
    </source>
</reference>
<reference key="4">
    <citation type="journal article" date="2007" name="Genome Res.">
        <title>Approaching a complete repository of sequence-verified protein-encoding clones for Saccharomyces cerevisiae.</title>
        <authorList>
            <person name="Hu Y."/>
            <person name="Rolfs A."/>
            <person name="Bhullar B."/>
            <person name="Murthy T.V.S."/>
            <person name="Zhu C."/>
            <person name="Berger M.F."/>
            <person name="Camargo A.A."/>
            <person name="Kelley F."/>
            <person name="McCarron S."/>
            <person name="Jepson D."/>
            <person name="Richardson A."/>
            <person name="Raphael J."/>
            <person name="Moreira D."/>
            <person name="Taycher E."/>
            <person name="Zuo D."/>
            <person name="Mohr S."/>
            <person name="Kane M.F."/>
            <person name="Williamson J."/>
            <person name="Simpson A.J.G."/>
            <person name="Bulyk M.L."/>
            <person name="Harlow E."/>
            <person name="Marsischky G."/>
            <person name="Kolodner R.D."/>
            <person name="LaBaer J."/>
        </authorList>
    </citation>
    <scope>NUCLEOTIDE SEQUENCE [GENOMIC DNA]</scope>
    <source>
        <strain>ATCC 204508 / S288c</strain>
    </source>
</reference>
<reference key="5">
    <citation type="journal article" date="1986" name="Agric. Biol. Chem.">
        <title>Metabolism of alpha-ketoaldehydes in yeasts: purification and characterization of glyoxalase II from Saccharomyces cerevisiae.</title>
        <authorList>
            <person name="Murata K."/>
            <person name="Inoue Y."/>
            <person name="Watanabe K."/>
            <person name="Fukuda Y."/>
            <person name="Saikusa T."/>
            <person name="Shimosaka M."/>
            <person name="Kimura A."/>
        </authorList>
    </citation>
    <scope>FUNCTION</scope>
    <scope>ACTIVITY REGULATION</scope>
</reference>
<reference key="6">
    <citation type="journal article" date="1987" name="Agric. Biol. Chem.">
        <title>Purification and characterization of glutathione thiol esterase from Saccharomyces cerevisiae.</title>
        <authorList>
            <person name="Murata K."/>
            <person name="Sato N."/>
            <person name="Rhee H.-I."/>
            <person name="Watanabe K."/>
            <person name="Kimura A."/>
        </authorList>
    </citation>
    <scope>FUNCTION</scope>
</reference>
<reference key="7">
    <citation type="journal article" date="1999" name="Protein Expr. Purif.">
        <title>Heterologous expression, purification, and kinetic comparison of the cytoplasmic and mitochondrial glyoxalase II enzymes, Glo2p and Glo4p, from Saccharomyces cerevisiae.</title>
        <authorList>
            <person name="Bito A."/>
            <person name="Haider M."/>
            <person name="Briza P."/>
            <person name="Strasser P."/>
            <person name="Breitenbach M."/>
        </authorList>
    </citation>
    <scope>PROTEIN SEQUENCE OF 11-16</scope>
    <scope>FUNCTION</scope>
    <scope>CATALYTIC ACTIVITY</scope>
    <scope>BIOPHYSICOCHEMICAL PROPERTIES</scope>
    <scope>MASS SPECTROMETRY</scope>
</reference>
<evidence type="ECO:0000250" key="1">
    <source>
        <dbReference type="UniProtKB" id="Q16775"/>
    </source>
</evidence>
<evidence type="ECO:0000269" key="2">
    <source>
    </source>
</evidence>
<evidence type="ECO:0000269" key="3">
    <source>
    </source>
</evidence>
<evidence type="ECO:0000269" key="4">
    <source ref="5"/>
</evidence>
<evidence type="ECO:0000269" key="5">
    <source ref="6"/>
</evidence>
<evidence type="ECO:0000303" key="6">
    <source>
    </source>
</evidence>
<evidence type="ECO:0000305" key="7"/>
<evidence type="ECO:0000305" key="8">
    <source>
    </source>
</evidence>
<evidence type="ECO:0000305" key="9">
    <source ref="5"/>
</evidence>
<evidence type="ECO:0000305" key="10">
    <source ref="6"/>
</evidence>
<proteinExistence type="evidence at protein level"/>
<sequence length="285" mass="32339">MKFLLQQIRNMHVKPIKMRWLTGGVNYSYLLSTEDRRNSWLIDPAEPLEVSPKLSAEEKKSIDAIVNTHHHYDHSGGNLALYSILCQENSGHDIKIIGGSKSSPGVTEVPDNLQQYHLGNLRVTCIRTPCHTKDSICYYIKDLETGEQCIFTGDTLFIAGCGRFFEGTGRDMDMALNQIMLRAVGETNWNKVKIYPGHEYTKGNVSFIRAKIYSDIGQNKEFDALEQYCKSNECTTGHFTLRDELGYNPFMRLDDRAVRLAVGDTAGTYPRSVVMQELRKLKNAM</sequence>
<gene>
    <name evidence="6" type="primary">GLO4</name>
    <name type="synonym">GER1</name>
    <name type="ordered locus">YOR040W</name>
    <name type="ORF">O2758</name>
    <name type="ORF">OR26.33</name>
</gene>
<dbReference type="EC" id="3.1.2.6" evidence="2"/>
<dbReference type="EMBL" id="X82893">
    <property type="protein sequence ID" value="CAA58065.1"/>
    <property type="molecule type" value="Genomic_DNA"/>
</dbReference>
<dbReference type="EMBL" id="X87331">
    <property type="protein sequence ID" value="CAA60759.1"/>
    <property type="molecule type" value="Genomic_DNA"/>
</dbReference>
<dbReference type="EMBL" id="Z74948">
    <property type="protein sequence ID" value="CAA99230.1"/>
    <property type="molecule type" value="Genomic_DNA"/>
</dbReference>
<dbReference type="EMBL" id="AY692965">
    <property type="protein sequence ID" value="AAT92984.1"/>
    <property type="molecule type" value="Genomic_DNA"/>
</dbReference>
<dbReference type="EMBL" id="BK006948">
    <property type="protein sequence ID" value="DAA10823.1"/>
    <property type="molecule type" value="Genomic_DNA"/>
</dbReference>
<dbReference type="PIR" id="S62179">
    <property type="entry name" value="S62179"/>
</dbReference>
<dbReference type="RefSeq" id="NP_014683.1">
    <property type="nucleotide sequence ID" value="NM_001183459.1"/>
</dbReference>
<dbReference type="SMR" id="Q12320"/>
<dbReference type="BioGRID" id="34442">
    <property type="interactions" value="128"/>
</dbReference>
<dbReference type="DIP" id="DIP-4183N"/>
<dbReference type="FunCoup" id="Q12320">
    <property type="interactions" value="530"/>
</dbReference>
<dbReference type="IntAct" id="Q12320">
    <property type="interactions" value="2"/>
</dbReference>
<dbReference type="MINT" id="Q12320"/>
<dbReference type="STRING" id="4932.YOR040W"/>
<dbReference type="iPTMnet" id="Q12320"/>
<dbReference type="PaxDb" id="4932-YOR040W"/>
<dbReference type="PeptideAtlas" id="Q12320"/>
<dbReference type="EnsemblFungi" id="YOR040W_mRNA">
    <property type="protein sequence ID" value="YOR040W"/>
    <property type="gene ID" value="YOR040W"/>
</dbReference>
<dbReference type="GeneID" id="854205"/>
<dbReference type="KEGG" id="sce:YOR040W"/>
<dbReference type="AGR" id="SGD:S000005566"/>
<dbReference type="SGD" id="S000005566">
    <property type="gene designation" value="GLO4"/>
</dbReference>
<dbReference type="VEuPathDB" id="FungiDB:YOR040W"/>
<dbReference type="eggNOG" id="KOG0813">
    <property type="taxonomic scope" value="Eukaryota"/>
</dbReference>
<dbReference type="GeneTree" id="ENSGT00940000171630"/>
<dbReference type="HOGENOM" id="CLU_030571_4_0_1"/>
<dbReference type="InParanoid" id="Q12320"/>
<dbReference type="OMA" id="DTVFTEG"/>
<dbReference type="OrthoDB" id="515692at2759"/>
<dbReference type="BioCyc" id="MetaCyc:YOR040W-MONOMER"/>
<dbReference type="BioCyc" id="YEAST:YOR040W-MONOMER"/>
<dbReference type="BRENDA" id="3.1.2.6">
    <property type="organism ID" value="984"/>
</dbReference>
<dbReference type="Reactome" id="R-SCE-70268">
    <property type="pathway name" value="Pyruvate metabolism"/>
</dbReference>
<dbReference type="SABIO-RK" id="Q12320"/>
<dbReference type="UniPathway" id="UPA00619">
    <property type="reaction ID" value="UER00676"/>
</dbReference>
<dbReference type="BioGRID-ORCS" id="854205">
    <property type="hits" value="1 hit in 10 CRISPR screens"/>
</dbReference>
<dbReference type="PRO" id="PR:Q12320"/>
<dbReference type="Proteomes" id="UP000002311">
    <property type="component" value="Chromosome XV"/>
</dbReference>
<dbReference type="RNAct" id="Q12320">
    <property type="molecule type" value="protein"/>
</dbReference>
<dbReference type="GO" id="GO:0005759">
    <property type="term" value="C:mitochondrial matrix"/>
    <property type="evidence" value="ECO:0000314"/>
    <property type="project" value="SGD"/>
</dbReference>
<dbReference type="GO" id="GO:0005739">
    <property type="term" value="C:mitochondrion"/>
    <property type="evidence" value="ECO:0007005"/>
    <property type="project" value="SGD"/>
</dbReference>
<dbReference type="GO" id="GO:0004416">
    <property type="term" value="F:hydroxyacylglutathione hydrolase activity"/>
    <property type="evidence" value="ECO:0000314"/>
    <property type="project" value="SGD"/>
</dbReference>
<dbReference type="GO" id="GO:0046872">
    <property type="term" value="F:metal ion binding"/>
    <property type="evidence" value="ECO:0007669"/>
    <property type="project" value="UniProtKB-KW"/>
</dbReference>
<dbReference type="GO" id="GO:0019243">
    <property type="term" value="P:methylglyoxal catabolic process to D-lactate via S-lactoyl-glutathione"/>
    <property type="evidence" value="ECO:0000314"/>
    <property type="project" value="SGD"/>
</dbReference>
<dbReference type="CDD" id="cd07723">
    <property type="entry name" value="hydroxyacylglutathione_hydrolase_MBL-fold"/>
    <property type="match status" value="1"/>
</dbReference>
<dbReference type="FunFam" id="3.60.15.10:FF:000045">
    <property type="entry name" value="Hydroxyacylglutathione hydrolase"/>
    <property type="match status" value="1"/>
</dbReference>
<dbReference type="Gene3D" id="3.60.15.10">
    <property type="entry name" value="Ribonuclease Z/Hydroxyacylglutathione hydrolase-like"/>
    <property type="match status" value="1"/>
</dbReference>
<dbReference type="InterPro" id="IPR035680">
    <property type="entry name" value="Clx_II_MBL"/>
</dbReference>
<dbReference type="InterPro" id="IPR032282">
    <property type="entry name" value="HAGH_C"/>
</dbReference>
<dbReference type="InterPro" id="IPR001279">
    <property type="entry name" value="Metallo-B-lactamas"/>
</dbReference>
<dbReference type="InterPro" id="IPR036866">
    <property type="entry name" value="RibonucZ/Hydroxyglut_hydro"/>
</dbReference>
<dbReference type="PANTHER" id="PTHR11935">
    <property type="entry name" value="BETA LACTAMASE DOMAIN"/>
    <property type="match status" value="1"/>
</dbReference>
<dbReference type="PANTHER" id="PTHR11935:SF94">
    <property type="entry name" value="TENZING NORGAY, ISOFORM C"/>
    <property type="match status" value="1"/>
</dbReference>
<dbReference type="Pfam" id="PF16123">
    <property type="entry name" value="HAGH_C"/>
    <property type="match status" value="1"/>
</dbReference>
<dbReference type="Pfam" id="PF00753">
    <property type="entry name" value="Lactamase_B"/>
    <property type="match status" value="1"/>
</dbReference>
<dbReference type="SMART" id="SM00849">
    <property type="entry name" value="Lactamase_B"/>
    <property type="match status" value="1"/>
</dbReference>
<dbReference type="SUPFAM" id="SSF56281">
    <property type="entry name" value="Metallo-hydrolase/oxidoreductase"/>
    <property type="match status" value="1"/>
</dbReference>
<keyword id="KW-0903">Direct protein sequencing</keyword>
<keyword id="KW-0378">Hydrolase</keyword>
<keyword id="KW-0479">Metal-binding</keyword>
<keyword id="KW-0496">Mitochondrion</keyword>
<keyword id="KW-1185">Reference proteome</keyword>
<keyword id="KW-0809">Transit peptide</keyword>
<keyword id="KW-0862">Zinc</keyword>
<comment type="function">
    <text evidence="2 4 5">Thiolesterase that catalyzes the hydrolysis of S-D-lactoylglutathione to form glutathione and D-lactic acid. Involved in the metabolism of methylglyoxal, a toxic compound for yeast proliferation, by converting methylglyoxal to lactate via S-D-lactoylglutathione by sequential enzyme reactions catalyzed by glyoxalase I and glyoxalase II.</text>
</comment>
<comment type="catalytic activity">
    <reaction evidence="2">
        <text>an S-(2-hydroxyacyl)glutathione + H2O = a 2-hydroxy carboxylate + glutathione + H(+)</text>
        <dbReference type="Rhea" id="RHEA:21864"/>
        <dbReference type="ChEBI" id="CHEBI:15377"/>
        <dbReference type="ChEBI" id="CHEBI:15378"/>
        <dbReference type="ChEBI" id="CHEBI:57925"/>
        <dbReference type="ChEBI" id="CHEBI:58896"/>
        <dbReference type="ChEBI" id="CHEBI:71261"/>
        <dbReference type="EC" id="3.1.2.6"/>
    </reaction>
</comment>
<comment type="catalytic activity">
    <reaction evidence="2">
        <text>(R)-S-lactoylglutathione + H2O = (R)-lactate + glutathione + H(+)</text>
        <dbReference type="Rhea" id="RHEA:25245"/>
        <dbReference type="ChEBI" id="CHEBI:15377"/>
        <dbReference type="ChEBI" id="CHEBI:15378"/>
        <dbReference type="ChEBI" id="CHEBI:16004"/>
        <dbReference type="ChEBI" id="CHEBI:57474"/>
        <dbReference type="ChEBI" id="CHEBI:57925"/>
        <dbReference type="EC" id="3.1.2.6"/>
    </reaction>
</comment>
<comment type="cofactor">
    <cofactor evidence="1">
        <name>Zn(2+)</name>
        <dbReference type="ChEBI" id="CHEBI:29105"/>
    </cofactor>
    <text evidence="1">Binds 2 Zn(2+) ions per subunit.</text>
</comment>
<comment type="activity regulation">
    <text evidence="4">Inhibited by various thiol compounds such as glutathione and coenzyme A.</text>
</comment>
<comment type="biophysicochemical properties">
    <kinetics>
        <KM evidence="2">79.3 uM for (R)-S-lactoylglutathione</KM>
        <KM evidence="2">25.6 uM for (R)-S-mandeloylglutathione</KM>
        <text evidence="2">kcat is 605 sec(-1) with (R)-S-lactoylglutathione as substrate and 38.1 sec(-1) with (R)-S-mandeloylglutathione as substrate.</text>
    </kinetics>
    <phDependence>
        <text evidence="2">Optimum pH is 6.5-9.</text>
    </phDependence>
</comment>
<comment type="pathway">
    <text evidence="8">Secondary metabolite metabolism; methylglyoxal degradation; (R)-lactate from methylglyoxal: step 2/2.</text>
</comment>
<comment type="subcellular location">
    <subcellularLocation>
        <location evidence="3">Mitochondrion matrix</location>
    </subcellularLocation>
</comment>
<comment type="mass spectrometry" mass="31036.0" error="13.0" method="MALDI" evidence="2"/>
<comment type="similarity">
    <text evidence="7">Belongs to the metallo-beta-lactamase superfamily. Glyoxalase II family.</text>
</comment>
<comment type="caution">
    <text evidence="3 9 10">The enzyme reported here differs from 2 previously reported yeast proteins with glyoxalase II activity both in molecular weight and in the kinetic parameters determined (Ref.5, Ref.6). The lower molecular masses and the much lower specific activities could indicate that these proteins were degradation products of either GLO2 or GLO4. In extracts of a yeast strain lacking both glyoxalase II genes no residual glyoxalase II activity was detected, indicating that there is no further protein with glyoxalase II activity present in yeast cells (PubMed:9261170).</text>
</comment>
<feature type="transit peptide" description="Mitochondrion" evidence="2">
    <location>
        <begin position="1"/>
        <end position="10"/>
    </location>
</feature>
<feature type="chain" id="PRO_0000012285" description="Hydroxyacylglutathione hydrolase, mitochondrial">
    <location>
        <begin position="11"/>
        <end position="285"/>
    </location>
</feature>
<feature type="binding site" evidence="1">
    <location>
        <position position="69"/>
    </location>
    <ligand>
        <name>Zn(2+)</name>
        <dbReference type="ChEBI" id="CHEBI:29105"/>
        <label>1</label>
    </ligand>
</feature>
<feature type="binding site" evidence="1">
    <location>
        <position position="71"/>
    </location>
    <ligand>
        <name>Zn(2+)</name>
        <dbReference type="ChEBI" id="CHEBI:29105"/>
        <label>1</label>
    </ligand>
</feature>
<feature type="binding site" evidence="1">
    <location>
        <position position="73"/>
    </location>
    <ligand>
        <name>Zn(2+)</name>
        <dbReference type="ChEBI" id="CHEBI:29105"/>
        <label>2</label>
    </ligand>
</feature>
<feature type="binding site" evidence="1">
    <location>
        <position position="74"/>
    </location>
    <ligand>
        <name>Zn(2+)</name>
        <dbReference type="ChEBI" id="CHEBI:29105"/>
        <label>2</label>
    </ligand>
</feature>
<feature type="binding site" evidence="1">
    <location>
        <position position="131"/>
    </location>
    <ligand>
        <name>Zn(2+)</name>
        <dbReference type="ChEBI" id="CHEBI:29105"/>
        <label>1</label>
    </ligand>
</feature>
<feature type="binding site" evidence="1">
    <location>
        <position position="154"/>
    </location>
    <ligand>
        <name>Zn(2+)</name>
        <dbReference type="ChEBI" id="CHEBI:29105"/>
        <label>1</label>
    </ligand>
</feature>
<feature type="binding site" evidence="1">
    <location>
        <position position="154"/>
    </location>
    <ligand>
        <name>Zn(2+)</name>
        <dbReference type="ChEBI" id="CHEBI:29105"/>
        <label>2</label>
    </ligand>
</feature>
<feature type="binding site" evidence="1">
    <location>
        <position position="198"/>
    </location>
    <ligand>
        <name>Zn(2+)</name>
        <dbReference type="ChEBI" id="CHEBI:29105"/>
        <label>2</label>
    </ligand>
</feature>
<organism>
    <name type="scientific">Saccharomyces cerevisiae (strain ATCC 204508 / S288c)</name>
    <name type="common">Baker's yeast</name>
    <dbReference type="NCBI Taxonomy" id="559292"/>
    <lineage>
        <taxon>Eukaryota</taxon>
        <taxon>Fungi</taxon>
        <taxon>Dikarya</taxon>
        <taxon>Ascomycota</taxon>
        <taxon>Saccharomycotina</taxon>
        <taxon>Saccharomycetes</taxon>
        <taxon>Saccharomycetales</taxon>
        <taxon>Saccharomycetaceae</taxon>
        <taxon>Saccharomyces</taxon>
    </lineage>
</organism>